<organism>
    <name type="scientific">Bacillus anthracis (strain A0248)</name>
    <dbReference type="NCBI Taxonomy" id="592021"/>
    <lineage>
        <taxon>Bacteria</taxon>
        <taxon>Bacillati</taxon>
        <taxon>Bacillota</taxon>
        <taxon>Bacilli</taxon>
        <taxon>Bacillales</taxon>
        <taxon>Bacillaceae</taxon>
        <taxon>Bacillus</taxon>
        <taxon>Bacillus cereus group</taxon>
    </lineage>
</organism>
<gene>
    <name evidence="1" type="primary">nfo</name>
    <name type="ordered locus">BAA_4528</name>
</gene>
<evidence type="ECO:0000255" key="1">
    <source>
        <dbReference type="HAMAP-Rule" id="MF_00152"/>
    </source>
</evidence>
<comment type="function">
    <text evidence="1">Endonuclease IV plays a role in DNA repair. It cleaves phosphodiester bonds at apurinic or apyrimidinic (AP) sites, generating a 3'-hydroxyl group and a 5'-terminal sugar phosphate.</text>
</comment>
<comment type="catalytic activity">
    <reaction evidence="1">
        <text>Endonucleolytic cleavage to 5'-phosphooligonucleotide end-products.</text>
        <dbReference type="EC" id="3.1.21.2"/>
    </reaction>
</comment>
<comment type="cofactor">
    <cofactor evidence="1">
        <name>Zn(2+)</name>
        <dbReference type="ChEBI" id="CHEBI:29105"/>
    </cofactor>
    <text evidence="1">Binds 3 Zn(2+) ions.</text>
</comment>
<comment type="similarity">
    <text evidence="1">Belongs to the AP endonuclease 2 family.</text>
</comment>
<keyword id="KW-0227">DNA damage</keyword>
<keyword id="KW-0234">DNA repair</keyword>
<keyword id="KW-0255">Endonuclease</keyword>
<keyword id="KW-0378">Hydrolase</keyword>
<keyword id="KW-0479">Metal-binding</keyword>
<keyword id="KW-0540">Nuclease</keyword>
<keyword id="KW-0862">Zinc</keyword>
<sequence>MLKIGSHVSMSGKKMLLAASEEAVSYGATTFMIYTGAPQNTRRKPIEELNIEAGRKHMEQNGIEEIIVHAPYIINVGNTTKPETFQLGVDFLRMEIERTSALGVAKQIVLHPGAHVGAGADAGIQQIIKGLNEVLTPDQTVNIALETMAGKGTECGRSFEEIAKIIDGVKYNEKLSVCFDTCHTHDAGYDIVNNFDGVLNEFDKIVGIDRLQVLHINDSKNVRGAGKDRHENIGFGHIGYKALHHIVHHPQLTHVPKILETPYVGEDKKDKKPPYKLEIEMLKNGTFDEGLLEKIKAQ</sequence>
<protein>
    <recommendedName>
        <fullName evidence="1">Probable endonuclease 4</fullName>
        <ecNumber evidence="1">3.1.21.2</ecNumber>
    </recommendedName>
    <alternativeName>
        <fullName evidence="1">Endodeoxyribonuclease IV</fullName>
    </alternativeName>
    <alternativeName>
        <fullName evidence="1">Endonuclease IV</fullName>
    </alternativeName>
</protein>
<name>END4_BACAA</name>
<reference key="1">
    <citation type="submission" date="2009-04" db="EMBL/GenBank/DDBJ databases">
        <title>Genome sequence of Bacillus anthracis A0248.</title>
        <authorList>
            <person name="Dodson R.J."/>
            <person name="Munk A.C."/>
            <person name="Bruce D."/>
            <person name="Detter C."/>
            <person name="Tapia R."/>
            <person name="Sutton G."/>
            <person name="Sims D."/>
            <person name="Brettin T."/>
        </authorList>
    </citation>
    <scope>NUCLEOTIDE SEQUENCE [LARGE SCALE GENOMIC DNA]</scope>
    <source>
        <strain>A0248</strain>
    </source>
</reference>
<feature type="chain" id="PRO_1000123315" description="Probable endonuclease 4">
    <location>
        <begin position="1"/>
        <end position="298"/>
    </location>
</feature>
<feature type="binding site" evidence="1">
    <location>
        <position position="69"/>
    </location>
    <ligand>
        <name>Zn(2+)</name>
        <dbReference type="ChEBI" id="CHEBI:29105"/>
        <label>1</label>
    </ligand>
</feature>
<feature type="binding site" evidence="1">
    <location>
        <position position="111"/>
    </location>
    <ligand>
        <name>Zn(2+)</name>
        <dbReference type="ChEBI" id="CHEBI:29105"/>
        <label>1</label>
    </ligand>
</feature>
<feature type="binding site" evidence="1">
    <location>
        <position position="146"/>
    </location>
    <ligand>
        <name>Zn(2+)</name>
        <dbReference type="ChEBI" id="CHEBI:29105"/>
        <label>1</label>
    </ligand>
</feature>
<feature type="binding site" evidence="1">
    <location>
        <position position="146"/>
    </location>
    <ligand>
        <name>Zn(2+)</name>
        <dbReference type="ChEBI" id="CHEBI:29105"/>
        <label>2</label>
    </ligand>
</feature>
<feature type="binding site" evidence="1">
    <location>
        <position position="180"/>
    </location>
    <ligand>
        <name>Zn(2+)</name>
        <dbReference type="ChEBI" id="CHEBI:29105"/>
        <label>2</label>
    </ligand>
</feature>
<feature type="binding site" evidence="1">
    <location>
        <position position="183"/>
    </location>
    <ligand>
        <name>Zn(2+)</name>
        <dbReference type="ChEBI" id="CHEBI:29105"/>
        <label>3</label>
    </ligand>
</feature>
<feature type="binding site" evidence="1">
    <location>
        <position position="215"/>
    </location>
    <ligand>
        <name>Zn(2+)</name>
        <dbReference type="ChEBI" id="CHEBI:29105"/>
        <label>2</label>
    </ligand>
</feature>
<feature type="binding site" evidence="1">
    <location>
        <position position="228"/>
    </location>
    <ligand>
        <name>Zn(2+)</name>
        <dbReference type="ChEBI" id="CHEBI:29105"/>
        <label>3</label>
    </ligand>
</feature>
<feature type="binding site" evidence="1">
    <location>
        <position position="230"/>
    </location>
    <ligand>
        <name>Zn(2+)</name>
        <dbReference type="ChEBI" id="CHEBI:29105"/>
        <label>3</label>
    </ligand>
</feature>
<feature type="binding site" evidence="1">
    <location>
        <position position="260"/>
    </location>
    <ligand>
        <name>Zn(2+)</name>
        <dbReference type="ChEBI" id="CHEBI:29105"/>
        <label>2</label>
    </ligand>
</feature>
<proteinExistence type="inferred from homology"/>
<dbReference type="EC" id="3.1.21.2" evidence="1"/>
<dbReference type="EMBL" id="CP001598">
    <property type="protein sequence ID" value="ACQ49369.1"/>
    <property type="molecule type" value="Genomic_DNA"/>
</dbReference>
<dbReference type="RefSeq" id="WP_000912468.1">
    <property type="nucleotide sequence ID" value="NC_012659.1"/>
</dbReference>
<dbReference type="SMR" id="C3P8J1"/>
<dbReference type="GeneID" id="45024164"/>
<dbReference type="KEGG" id="bai:BAA_4528"/>
<dbReference type="HOGENOM" id="CLU_025885_4_1_9"/>
<dbReference type="GO" id="GO:0008833">
    <property type="term" value="F:deoxyribonuclease IV (phage-T4-induced) activity"/>
    <property type="evidence" value="ECO:0007669"/>
    <property type="project" value="UniProtKB-UniRule"/>
</dbReference>
<dbReference type="GO" id="GO:0003677">
    <property type="term" value="F:DNA binding"/>
    <property type="evidence" value="ECO:0007669"/>
    <property type="project" value="InterPro"/>
</dbReference>
<dbReference type="GO" id="GO:0003906">
    <property type="term" value="F:DNA-(apurinic or apyrimidinic site) endonuclease activity"/>
    <property type="evidence" value="ECO:0007669"/>
    <property type="project" value="TreeGrafter"/>
</dbReference>
<dbReference type="GO" id="GO:0008081">
    <property type="term" value="F:phosphoric diester hydrolase activity"/>
    <property type="evidence" value="ECO:0007669"/>
    <property type="project" value="TreeGrafter"/>
</dbReference>
<dbReference type="GO" id="GO:0008270">
    <property type="term" value="F:zinc ion binding"/>
    <property type="evidence" value="ECO:0007669"/>
    <property type="project" value="UniProtKB-UniRule"/>
</dbReference>
<dbReference type="GO" id="GO:0006284">
    <property type="term" value="P:base-excision repair"/>
    <property type="evidence" value="ECO:0007669"/>
    <property type="project" value="TreeGrafter"/>
</dbReference>
<dbReference type="CDD" id="cd00019">
    <property type="entry name" value="AP2Ec"/>
    <property type="match status" value="1"/>
</dbReference>
<dbReference type="FunFam" id="3.20.20.150:FF:000001">
    <property type="entry name" value="Probable endonuclease 4"/>
    <property type="match status" value="1"/>
</dbReference>
<dbReference type="Gene3D" id="3.20.20.150">
    <property type="entry name" value="Divalent-metal-dependent TIM barrel enzymes"/>
    <property type="match status" value="1"/>
</dbReference>
<dbReference type="HAMAP" id="MF_00152">
    <property type="entry name" value="Nfo"/>
    <property type="match status" value="1"/>
</dbReference>
<dbReference type="InterPro" id="IPR001719">
    <property type="entry name" value="AP_endonuc_2"/>
</dbReference>
<dbReference type="InterPro" id="IPR018246">
    <property type="entry name" value="AP_endonuc_F2_Zn_BS"/>
</dbReference>
<dbReference type="InterPro" id="IPR036237">
    <property type="entry name" value="Xyl_isomerase-like_sf"/>
</dbReference>
<dbReference type="InterPro" id="IPR013022">
    <property type="entry name" value="Xyl_isomerase-like_TIM-brl"/>
</dbReference>
<dbReference type="NCBIfam" id="TIGR00587">
    <property type="entry name" value="nfo"/>
    <property type="match status" value="1"/>
</dbReference>
<dbReference type="NCBIfam" id="NF002196">
    <property type="entry name" value="PRK01060.1-1"/>
    <property type="match status" value="1"/>
</dbReference>
<dbReference type="PANTHER" id="PTHR21445:SF0">
    <property type="entry name" value="APURINIC-APYRIMIDINIC ENDONUCLEASE"/>
    <property type="match status" value="1"/>
</dbReference>
<dbReference type="PANTHER" id="PTHR21445">
    <property type="entry name" value="ENDONUCLEASE IV ENDODEOXYRIBONUCLEASE IV"/>
    <property type="match status" value="1"/>
</dbReference>
<dbReference type="Pfam" id="PF01261">
    <property type="entry name" value="AP_endonuc_2"/>
    <property type="match status" value="1"/>
</dbReference>
<dbReference type="SMART" id="SM00518">
    <property type="entry name" value="AP2Ec"/>
    <property type="match status" value="1"/>
</dbReference>
<dbReference type="SUPFAM" id="SSF51658">
    <property type="entry name" value="Xylose isomerase-like"/>
    <property type="match status" value="1"/>
</dbReference>
<dbReference type="PROSITE" id="PS00729">
    <property type="entry name" value="AP_NUCLEASE_F2_1"/>
    <property type="match status" value="1"/>
</dbReference>
<dbReference type="PROSITE" id="PS00730">
    <property type="entry name" value="AP_NUCLEASE_F2_2"/>
    <property type="match status" value="1"/>
</dbReference>
<dbReference type="PROSITE" id="PS00731">
    <property type="entry name" value="AP_NUCLEASE_F2_3"/>
    <property type="match status" value="1"/>
</dbReference>
<dbReference type="PROSITE" id="PS51432">
    <property type="entry name" value="AP_NUCLEASE_F2_4"/>
    <property type="match status" value="1"/>
</dbReference>
<accession>C3P8J1</accession>